<dbReference type="EMBL" id="M88106">
    <property type="protein sequence ID" value="AAA25216.1"/>
    <property type="status" value="ALT_FRAME"/>
    <property type="molecule type" value="Genomic_DNA"/>
</dbReference>
<dbReference type="PIR" id="B48945">
    <property type="entry name" value="B48945"/>
</dbReference>
<dbReference type="GO" id="GO:0005829">
    <property type="term" value="C:cytosol"/>
    <property type="evidence" value="ECO:0007669"/>
    <property type="project" value="TreeGrafter"/>
</dbReference>
<dbReference type="GO" id="GO:0005524">
    <property type="term" value="F:ATP binding"/>
    <property type="evidence" value="ECO:0007669"/>
    <property type="project" value="UniProtKB-UniRule"/>
</dbReference>
<dbReference type="GO" id="GO:0016887">
    <property type="term" value="F:ATP hydrolysis activity"/>
    <property type="evidence" value="ECO:0007669"/>
    <property type="project" value="InterPro"/>
</dbReference>
<dbReference type="GO" id="GO:0140664">
    <property type="term" value="F:ATP-dependent DNA damage sensor activity"/>
    <property type="evidence" value="ECO:0007669"/>
    <property type="project" value="InterPro"/>
</dbReference>
<dbReference type="GO" id="GO:0003684">
    <property type="term" value="F:damaged DNA binding"/>
    <property type="evidence" value="ECO:0007669"/>
    <property type="project" value="UniProtKB-UniRule"/>
</dbReference>
<dbReference type="GO" id="GO:0003697">
    <property type="term" value="F:single-stranded DNA binding"/>
    <property type="evidence" value="ECO:0007669"/>
    <property type="project" value="UniProtKB-UniRule"/>
</dbReference>
<dbReference type="GO" id="GO:0006310">
    <property type="term" value="P:DNA recombination"/>
    <property type="evidence" value="ECO:0007669"/>
    <property type="project" value="UniProtKB-UniRule"/>
</dbReference>
<dbReference type="GO" id="GO:0006281">
    <property type="term" value="P:DNA repair"/>
    <property type="evidence" value="ECO:0007669"/>
    <property type="project" value="UniProtKB-UniRule"/>
</dbReference>
<dbReference type="GO" id="GO:0009432">
    <property type="term" value="P:SOS response"/>
    <property type="evidence" value="ECO:0007669"/>
    <property type="project" value="UniProtKB-UniRule"/>
</dbReference>
<dbReference type="CDD" id="cd00983">
    <property type="entry name" value="RecA"/>
    <property type="match status" value="1"/>
</dbReference>
<dbReference type="FunFam" id="3.40.50.300:FF:000087">
    <property type="entry name" value="Recombinase RecA"/>
    <property type="match status" value="1"/>
</dbReference>
<dbReference type="Gene3D" id="3.40.50.300">
    <property type="entry name" value="P-loop containing nucleotide triphosphate hydrolases"/>
    <property type="match status" value="1"/>
</dbReference>
<dbReference type="HAMAP" id="MF_00268">
    <property type="entry name" value="RecA"/>
    <property type="match status" value="1"/>
</dbReference>
<dbReference type="InterPro" id="IPR003593">
    <property type="entry name" value="AAA+_ATPase"/>
</dbReference>
<dbReference type="InterPro" id="IPR013765">
    <property type="entry name" value="DNA_recomb/repair_RecA"/>
</dbReference>
<dbReference type="InterPro" id="IPR020584">
    <property type="entry name" value="DNA_recomb/repair_RecA_CS"/>
</dbReference>
<dbReference type="InterPro" id="IPR027417">
    <property type="entry name" value="P-loop_NTPase"/>
</dbReference>
<dbReference type="InterPro" id="IPR049261">
    <property type="entry name" value="RecA-like_C"/>
</dbReference>
<dbReference type="InterPro" id="IPR049428">
    <property type="entry name" value="RecA-like_N"/>
</dbReference>
<dbReference type="InterPro" id="IPR020588">
    <property type="entry name" value="RecA_ATP-bd"/>
</dbReference>
<dbReference type="InterPro" id="IPR023400">
    <property type="entry name" value="RecA_C_sf"/>
</dbReference>
<dbReference type="InterPro" id="IPR020587">
    <property type="entry name" value="RecA_monomer-monomer_interface"/>
</dbReference>
<dbReference type="NCBIfam" id="TIGR02012">
    <property type="entry name" value="tigrfam_recA"/>
    <property type="match status" value="1"/>
</dbReference>
<dbReference type="PANTHER" id="PTHR45900:SF1">
    <property type="entry name" value="MITOCHONDRIAL DNA REPAIR PROTEIN RECA HOMOLOG-RELATED"/>
    <property type="match status" value="1"/>
</dbReference>
<dbReference type="PANTHER" id="PTHR45900">
    <property type="entry name" value="RECA"/>
    <property type="match status" value="1"/>
</dbReference>
<dbReference type="Pfam" id="PF00154">
    <property type="entry name" value="RecA"/>
    <property type="match status" value="1"/>
</dbReference>
<dbReference type="Pfam" id="PF21096">
    <property type="entry name" value="RecA_C"/>
    <property type="match status" value="1"/>
</dbReference>
<dbReference type="PRINTS" id="PR00142">
    <property type="entry name" value="RECA"/>
</dbReference>
<dbReference type="SMART" id="SM00382">
    <property type="entry name" value="AAA"/>
    <property type="match status" value="1"/>
</dbReference>
<dbReference type="SUPFAM" id="SSF52540">
    <property type="entry name" value="P-loop containing nucleoside triphosphate hydrolases"/>
    <property type="match status" value="1"/>
</dbReference>
<dbReference type="SUPFAM" id="SSF54752">
    <property type="entry name" value="RecA protein, C-terminal domain"/>
    <property type="match status" value="1"/>
</dbReference>
<dbReference type="PROSITE" id="PS00321">
    <property type="entry name" value="RECA_1"/>
    <property type="match status" value="1"/>
</dbReference>
<dbReference type="PROSITE" id="PS50162">
    <property type="entry name" value="RECA_2"/>
    <property type="match status" value="1"/>
</dbReference>
<dbReference type="PROSITE" id="PS50163">
    <property type="entry name" value="RECA_3"/>
    <property type="match status" value="1"/>
</dbReference>
<sequence length="387" mass="41419">MATKKKTNFDDITKKYGAERDKALADALALIEKDFGKGSLMRLGEAANQKVSVVSSGSLALDIALGAGGYPKGRIVEIYGPESSGKTTVALHAVAAVQKEGGIAAFIDAENALDPEYAKALGVNIDELLLSQPDYGEQGLQIAEKLITSGAVDLVVIDSVAALVPKAEIDGEIGDSSVGLQARMMSQAMRKLAGHINKTKTTAIFINQLREKVGVMFGSPETTPGGRALKFYASVRLDVRGSTKIEEGSGDNKTQIGKITKIKVVKNKVAPPFKVALVDIMFGEGISSTGELLNIAVEEGIIKKSGAWFAYNDEKIGQGAEKAKNYLKEHQDVFDEIDHKVRAAHGLLDDSEVAETEEETTASKTKAKAKKEEKXVETEEIELELQD</sequence>
<name>RECA_LACLC</name>
<keyword id="KW-0067">ATP-binding</keyword>
<keyword id="KW-0963">Cytoplasm</keyword>
<keyword id="KW-0227">DNA damage</keyword>
<keyword id="KW-0233">DNA recombination</keyword>
<keyword id="KW-0234">DNA repair</keyword>
<keyword id="KW-0238">DNA-binding</keyword>
<keyword id="KW-0547">Nucleotide-binding</keyword>
<keyword id="KW-0742">SOS response</keyword>
<protein>
    <recommendedName>
        <fullName evidence="1">Protein RecA</fullName>
    </recommendedName>
    <alternativeName>
        <fullName evidence="1">Recombinase A</fullName>
    </alternativeName>
</protein>
<feature type="chain" id="PRO_0000285245" description="Protein RecA">
    <location>
        <begin position="1"/>
        <end position="387"/>
    </location>
</feature>
<feature type="region of interest" description="Disordered" evidence="2">
    <location>
        <begin position="348"/>
        <end position="387"/>
    </location>
</feature>
<feature type="compositionally biased region" description="Acidic residues" evidence="2">
    <location>
        <begin position="349"/>
        <end position="360"/>
    </location>
</feature>
<feature type="compositionally biased region" description="Acidic residues" evidence="2">
    <location>
        <begin position="378"/>
        <end position="387"/>
    </location>
</feature>
<feature type="binding site" evidence="1">
    <location>
        <begin position="80"/>
        <end position="87"/>
    </location>
    <ligand>
        <name>ATP</name>
        <dbReference type="ChEBI" id="CHEBI:30616"/>
    </ligand>
</feature>
<proteinExistence type="inferred from homology"/>
<organism>
    <name type="scientific">Lactococcus lactis subsp. cremoris</name>
    <name type="common">Streptococcus cremoris</name>
    <dbReference type="NCBI Taxonomy" id="1359"/>
    <lineage>
        <taxon>Bacteria</taxon>
        <taxon>Bacillati</taxon>
        <taxon>Bacillota</taxon>
        <taxon>Bacilli</taxon>
        <taxon>Lactobacillales</taxon>
        <taxon>Streptococcaceae</taxon>
        <taxon>Lactococcus</taxon>
    </lineage>
</organism>
<accession>P0C2U5</accession>
<accession>Q01840</accession>
<accession>Q9CIK3</accession>
<gene>
    <name evidence="1" type="primary">recA</name>
</gene>
<evidence type="ECO:0000255" key="1">
    <source>
        <dbReference type="HAMAP-Rule" id="MF_00268"/>
    </source>
</evidence>
<evidence type="ECO:0000256" key="2">
    <source>
        <dbReference type="SAM" id="MobiDB-lite"/>
    </source>
</evidence>
<evidence type="ECO:0000305" key="3"/>
<comment type="function">
    <text evidence="1">Can catalyze the hydrolysis of ATP in the presence of single-stranded DNA, the ATP-dependent uptake of single-stranded DNA by duplex DNA, and the ATP-dependent hybridization of homologous single-stranded DNAs. It interacts with LexA causing its activation and leading to its autocatalytic cleavage.</text>
</comment>
<comment type="subcellular location">
    <subcellularLocation>
        <location evidence="1">Cytoplasm</location>
    </subcellularLocation>
</comment>
<comment type="similarity">
    <text evidence="1">Belongs to the RecA family.</text>
</comment>
<comment type="sequence caution" evidence="3">
    <conflict type="frameshift">
        <sequence resource="EMBL-CDS" id="AAA25216"/>
    </conflict>
</comment>
<reference key="1">
    <citation type="journal article" date="1992" name="Appl. Environ. Microbiol.">
        <title>Use of degenerate primers for polymerase chain reaction cloning and sequencing of the Lactococcus lactis subsp. lactis recA gene.</title>
        <authorList>
            <person name="Duwat P."/>
            <person name="Ehrlich S.D."/>
            <person name="Gruss A."/>
        </authorList>
    </citation>
    <scope>NUCLEOTIDE SEQUENCE [GENOMIC DNA]</scope>
    <source>
        <strain>NCDO 763 / ML3</strain>
    </source>
</reference>